<name>RNT1_ASPOR</name>
<evidence type="ECO:0000269" key="1">
    <source>
    </source>
</evidence>
<evidence type="ECO:0000269" key="2">
    <source>
    </source>
</evidence>
<evidence type="ECO:0000305" key="3"/>
<evidence type="ECO:0007829" key="4">
    <source>
        <dbReference type="PDB" id="1I0V"/>
    </source>
</evidence>
<evidence type="ECO:0007829" key="5">
    <source>
        <dbReference type="PDB" id="1RHL"/>
    </source>
</evidence>
<evidence type="ECO:0007829" key="6">
    <source>
        <dbReference type="PDB" id="1RN4"/>
    </source>
</evidence>
<evidence type="ECO:0007829" key="7">
    <source>
        <dbReference type="PDB" id="2BIR"/>
    </source>
</evidence>
<evidence type="ECO:0007829" key="8">
    <source>
        <dbReference type="PDB" id="4RNT"/>
    </source>
</evidence>
<sequence>MMYSKLLTLTTLLLPTALALPSLVERACDYTCGSNCYSSSDVSTAQAAGYQLHEDGETVGSNSYPHKYNNYEGFDFSVSSPYYEWPILSSGDVYSGGSPGADRVVFNENNQLAGVITHTGASGNNFVECT</sequence>
<accession>P00651</accession>
<accession>Q2U194</accession>
<proteinExistence type="evidence at protein level"/>
<gene>
    <name type="primary">rntA</name>
    <name type="ORF">AO090011000118</name>
</gene>
<comment type="catalytic activity">
    <reaction>
        <text>[RNA] containing guanosine + H2O = an [RNA fragment]-3'-guanosine-3'-phosphate + a 5'-hydroxy-ribonucleotide-3'-[RNA fragment].</text>
        <dbReference type="EC" id="4.6.1.24"/>
    </reaction>
</comment>
<comment type="subunit">
    <text>Monomer.</text>
</comment>
<comment type="similarity">
    <text evidence="3">Belongs to the ribonuclease N1/T1 family.</text>
</comment>
<comment type="online information" name="Worthington enzyme manual">
    <link uri="https://www.worthington-biochem.com/RT1/"/>
</comment>
<keyword id="KW-0002">3D-structure</keyword>
<keyword id="KW-0903">Direct protein sequencing</keyword>
<keyword id="KW-1015">Disulfide bond</keyword>
<keyword id="KW-0255">Endonuclease</keyword>
<keyword id="KW-0378">Hydrolase</keyword>
<keyword id="KW-0456">Lyase</keyword>
<keyword id="KW-0540">Nuclease</keyword>
<keyword id="KW-1185">Reference proteome</keyword>
<keyword id="KW-0732">Signal</keyword>
<protein>
    <recommendedName>
        <fullName>Guanyl-specific ribonuclease T1</fullName>
        <shortName>RNase T1</shortName>
        <ecNumber>4.6.1.24</ecNumber>
    </recommendedName>
</protein>
<feature type="signal peptide" evidence="2">
    <location>
        <begin position="1"/>
        <end position="26"/>
    </location>
</feature>
<feature type="chain" id="PRO_0000030833" description="Guanyl-specific ribonuclease T1">
    <location>
        <begin position="27"/>
        <end position="130"/>
    </location>
</feature>
<feature type="active site" evidence="1">
    <location>
        <position position="66"/>
    </location>
</feature>
<feature type="active site" description="Proton acceptor" evidence="1">
    <location>
        <position position="84"/>
    </location>
</feature>
<feature type="active site" description="Proton donor">
    <location>
        <position position="118"/>
    </location>
</feature>
<feature type="disulfide bond" evidence="2">
    <location>
        <begin position="28"/>
        <end position="36"/>
    </location>
</feature>
<feature type="disulfide bond" evidence="2">
    <location>
        <begin position="32"/>
        <end position="129"/>
    </location>
</feature>
<feature type="strand" evidence="4">
    <location>
        <begin position="29"/>
        <end position="32"/>
    </location>
</feature>
<feature type="strand" evidence="4">
    <location>
        <begin position="35"/>
        <end position="37"/>
    </location>
</feature>
<feature type="helix" evidence="4">
    <location>
        <begin position="39"/>
        <end position="55"/>
    </location>
</feature>
<feature type="turn" evidence="4">
    <location>
        <begin position="60"/>
        <end position="63"/>
    </location>
</feature>
<feature type="strand" evidence="4">
    <location>
        <begin position="64"/>
        <end position="68"/>
    </location>
</feature>
<feature type="strand" evidence="4">
    <location>
        <begin position="82"/>
        <end position="86"/>
    </location>
</feature>
<feature type="strand" evidence="5">
    <location>
        <begin position="91"/>
        <end position="93"/>
    </location>
</feature>
<feature type="strand" evidence="4">
    <location>
        <begin position="101"/>
        <end position="107"/>
    </location>
</feature>
<feature type="strand" evidence="7">
    <location>
        <begin position="108"/>
        <end position="110"/>
    </location>
</feature>
<feature type="strand" evidence="4">
    <location>
        <begin position="112"/>
        <end position="118"/>
    </location>
</feature>
<feature type="strand" evidence="8">
    <location>
        <begin position="121"/>
        <end position="124"/>
    </location>
</feature>
<feature type="strand" evidence="6">
    <location>
        <begin position="126"/>
        <end position="128"/>
    </location>
</feature>
<organism>
    <name type="scientific">Aspergillus oryzae (strain ATCC 42149 / RIB 40)</name>
    <name type="common">Yellow koji mold</name>
    <dbReference type="NCBI Taxonomy" id="510516"/>
    <lineage>
        <taxon>Eukaryota</taxon>
        <taxon>Fungi</taxon>
        <taxon>Dikarya</taxon>
        <taxon>Ascomycota</taxon>
        <taxon>Pezizomycotina</taxon>
        <taxon>Eurotiomycetes</taxon>
        <taxon>Eurotiomycetidae</taxon>
        <taxon>Eurotiales</taxon>
        <taxon>Aspergillaceae</taxon>
        <taxon>Aspergillus</taxon>
        <taxon>Aspergillus subgen. Circumdati</taxon>
    </lineage>
</organism>
<reference key="1">
    <citation type="journal article" date="1995" name="Biosci. Biotechnol. Biochem.">
        <title>Cloning and nucleotide sequence of the ribonuclease T1 gene (rntA) from Aspergillus oryzae and its expression in Saccharomyces cerevisiae and Aspergillus oryzae.</title>
        <authorList>
            <person name="Fujii T."/>
            <person name="Yamaoka H."/>
            <person name="Gomi K."/>
            <person name="Kitamoto K."/>
            <person name="Kumagai C."/>
        </authorList>
    </citation>
    <scope>NUCLEOTIDE SEQUENCE [GENOMIC DNA / MRNA]</scope>
    <source>
        <strain>ATCC 42149 / RIB 40</strain>
    </source>
</reference>
<reference key="2">
    <citation type="journal article" date="2005" name="Nature">
        <title>Genome sequencing and analysis of Aspergillus oryzae.</title>
        <authorList>
            <person name="Machida M."/>
            <person name="Asai K."/>
            <person name="Sano M."/>
            <person name="Tanaka T."/>
            <person name="Kumagai T."/>
            <person name="Terai G."/>
            <person name="Kusumoto K."/>
            <person name="Arima T."/>
            <person name="Akita O."/>
            <person name="Kashiwagi Y."/>
            <person name="Abe K."/>
            <person name="Gomi K."/>
            <person name="Horiuchi H."/>
            <person name="Kitamoto K."/>
            <person name="Kobayashi T."/>
            <person name="Takeuchi M."/>
            <person name="Denning D.W."/>
            <person name="Galagan J.E."/>
            <person name="Nierman W.C."/>
            <person name="Yu J."/>
            <person name="Archer D.B."/>
            <person name="Bennett J.W."/>
            <person name="Bhatnagar D."/>
            <person name="Cleveland T.E."/>
            <person name="Fedorova N.D."/>
            <person name="Gotoh O."/>
            <person name="Horikawa H."/>
            <person name="Hosoyama A."/>
            <person name="Ichinomiya M."/>
            <person name="Igarashi R."/>
            <person name="Iwashita K."/>
            <person name="Juvvadi P.R."/>
            <person name="Kato M."/>
            <person name="Kato Y."/>
            <person name="Kin T."/>
            <person name="Kokubun A."/>
            <person name="Maeda H."/>
            <person name="Maeyama N."/>
            <person name="Maruyama J."/>
            <person name="Nagasaki H."/>
            <person name="Nakajima T."/>
            <person name="Oda K."/>
            <person name="Okada K."/>
            <person name="Paulsen I."/>
            <person name="Sakamoto K."/>
            <person name="Sawano T."/>
            <person name="Takahashi M."/>
            <person name="Takase K."/>
            <person name="Terabayashi Y."/>
            <person name="Wortman J.R."/>
            <person name="Yamada O."/>
            <person name="Yamagata Y."/>
            <person name="Anazawa H."/>
            <person name="Hata Y."/>
            <person name="Koide Y."/>
            <person name="Komori T."/>
            <person name="Koyama Y."/>
            <person name="Minetoki T."/>
            <person name="Suharnan S."/>
            <person name="Tanaka A."/>
            <person name="Isono K."/>
            <person name="Kuhara S."/>
            <person name="Ogasawara N."/>
            <person name="Kikuchi H."/>
        </authorList>
    </citation>
    <scope>NUCLEOTIDE SEQUENCE [LARGE SCALE GENOMIC DNA]</scope>
    <source>
        <strain>ATCC 42149 / RIB 40</strain>
    </source>
</reference>
<reference key="3">
    <citation type="journal article" date="1971" name="J. Biochem.">
        <title>The structure and function of ribonuclease T1. XVII. Isolation and amino acid sequences of papain and subtilisin peptides from ribonuclease T1 -- the complete covalent structure of ribonuclease T1.</title>
        <authorList>
            <person name="Takahashi K."/>
        </authorList>
    </citation>
    <scope>PROTEIN SEQUENCE OF 27-130</scope>
</reference>
<reference key="4">
    <citation type="journal article" date="1985" name="J. Biochem.">
        <title>A revision and confirmation of the amino acid sequence of ribonuclease T1.</title>
        <authorList>
            <person name="Takahashi K."/>
        </authorList>
    </citation>
    <scope>SEQUENCE REVISION TO 97-99</scope>
</reference>
<reference key="5">
    <citation type="journal article" date="1967" name="J. Biol. Chem.">
        <title>The identification of a glutamic acid residue as part of the active site of ribonuclease T-1.</title>
        <authorList>
            <person name="Takahashi K."/>
            <person name="Stein W.H."/>
            <person name="Moore S."/>
        </authorList>
    </citation>
    <scope>ACTIVE SITE</scope>
</reference>
<reference key="6">
    <citation type="journal article" date="1971" name="J. Biochem.">
        <title>The structure and function of ribonuclease T1. XII. Further studies on rose bengal-catalyzed photooxidation of ribonuclease T1 -- identification of a critical histidine residue.</title>
        <authorList>
            <person name="Takahashi K."/>
        </authorList>
    </citation>
    <scope>ACTIVE SITE</scope>
</reference>
<reference key="7">
    <citation type="journal article" date="1988" name="J. Biol. Chem.">
        <title>Three-dimensional structure of the ribonuclease T1 2'-GMP complex at 1.9-A resolution.</title>
        <authorList>
            <person name="Arni R."/>
            <person name="Heinemann U."/>
            <person name="Tokuoka R."/>
            <person name="Saenger W."/>
        </authorList>
    </citation>
    <scope>X-RAY CRYSTALLOGRAPHY (1.9 ANGSTROMS)</scope>
</reference>
<reference key="8">
    <citation type="journal article" date="1989" name="J. Mol. Biol.">
        <title>Three-dimensional structure of ribonuclease T1 complexed with guanylyl-2',5'-guanosine at 1.8-A resolution.</title>
        <authorList>
            <person name="Koepke J."/>
            <person name="Maslowska M."/>
            <person name="Heinemann U."/>
            <person name="Saenger W."/>
        </authorList>
    </citation>
    <scope>X-RAY CRYSTALLOGRAPHY (1.8 ANGSTROMS)</scope>
</reference>
<reference key="9">
    <citation type="journal article" date="1992" name="J. Mol. Biol.">
        <title>Three-dimensional structure of a mutant ribonuclease T1 (Y45W) complexed with non-cognizable ribonucleotide, 2'AMP, and its comparison with a specific complex with 2'GMP.</title>
        <authorList>
            <person name="Hakoshima T."/>
            <person name="Itoh T."/>
            <person name="Tomita K."/>
            <person name="Goda K."/>
            <person name="Nishikawa S."/>
            <person name="Morioka H."/>
            <person name="Uesugi S."/>
            <person name="Ohtsuka E."/>
            <person name="Ikehara M."/>
        </authorList>
    </citation>
    <scope>X-RAY CRYSTALLOGRAPHY (1.7 ANGSTROMS) OF MUTANT TRP-71</scope>
</reference>
<reference key="10">
    <citation type="journal article" date="1998" name="Nat. Struct. Biol.">
        <title>Hydrolysis of a slow cyclic thiophosphate substrate of RNase T1 analyzed by time-resolved crystallography.</title>
        <authorList>
            <person name="Zegers I."/>
            <person name="Loris R."/>
            <person name="Dehollander G."/>
            <person name="Fattah Haikal A."/>
            <person name="Poortmans F."/>
            <person name="Steyaert J."/>
            <person name="Wyns L."/>
        </authorList>
    </citation>
    <scope>X-RAY CRYSTALLOGRAPHY (1.65 ANGSTROMS)</scope>
</reference>
<reference key="11">
    <citation type="journal article" date="1999" name="Biochemistry">
        <title>Three-dimensional structure of ribonuclease T1 complexed with an isosteric phosphonate substrate analogue of GpU: alternate substrate binding modes and catalysis.</title>
        <authorList>
            <person name="Arni R.K."/>
            <person name="Watanabe L."/>
            <person name="Ward R.J."/>
            <person name="Kreitman R.J."/>
            <person name="Kumar K."/>
            <person name="Walz F.G. Jr."/>
        </authorList>
    </citation>
    <scope>X-RAY CRYSTALLOGRAPHY (2.0 ANGSTROMS)</scope>
</reference>
<reference key="12">
    <citation type="journal article" date="1999" name="Protein Sci.">
        <title>Dissection of the structural and functional role of a conserved hydration site in RNase T1.</title>
        <authorList>
            <person name="Langhorst U."/>
            <person name="Loris R."/>
            <person name="Denisov V.P."/>
            <person name="Doumen J."/>
            <person name="Roose P."/>
            <person name="Maes D."/>
            <person name="Halle B."/>
            <person name="Steyaert J."/>
        </authorList>
    </citation>
    <scope>X-RAY CRYSTALLOGRAPHY (1.7 ANGSTROMS)</scope>
</reference>
<reference key="13">
    <citation type="journal article" date="2002" name="J. Biol. Chem.">
        <title>A nucleophile activation dyad in ribonucleases. A combined X-ray crystallographic/ab initio quantum chemical study.</title>
        <authorList>
            <person name="Mignon P."/>
            <person name="Steyaert J."/>
            <person name="Loris R."/>
            <person name="Geerlings P."/>
            <person name="Loverix S."/>
        </authorList>
    </citation>
    <scope>X-RAY CRYSTALLOGRAPHY (1.55 ANGSTROMS)</scope>
</reference>
<reference key="14">
    <citation type="journal article" date="1988" name="Eur. J. Biochem.">
        <title>Two-dimensional 1H-NMR investigation of ribonuclease T1. Resonance assignments, secondary and low-resolution tertiary structures of ribonuclease T1.</title>
        <authorList>
            <person name="Hoffmann E."/>
            <person name="Rueterjans H."/>
        </authorList>
    </citation>
    <scope>STRUCTURE BY NMR</scope>
</reference>
<dbReference type="EC" id="4.6.1.24"/>
<dbReference type="EMBL" id="D28341">
    <property type="protein sequence ID" value="BAA05707.1"/>
    <property type="molecule type" value="Genomic_DNA"/>
</dbReference>
<dbReference type="EMBL" id="D49428">
    <property type="protein sequence ID" value="BAA08407.1"/>
    <property type="molecule type" value="mRNA"/>
</dbReference>
<dbReference type="EMBL" id="BA000055">
    <property type="protein sequence ID" value="BAE64671.1"/>
    <property type="molecule type" value="Genomic_DNA"/>
</dbReference>
<dbReference type="PIR" id="JC4325">
    <property type="entry name" value="NRAST1"/>
</dbReference>
<dbReference type="RefSeq" id="XP_001825804.1">
    <property type="nucleotide sequence ID" value="XM_001825752.2"/>
</dbReference>
<dbReference type="PDB" id="1B2M">
    <property type="method" value="X-ray"/>
    <property type="resolution" value="2.00 A"/>
    <property type="chains" value="A/B=27-130"/>
</dbReference>
<dbReference type="PDB" id="1BIR">
    <property type="method" value="X-ray"/>
    <property type="resolution" value="1.80 A"/>
    <property type="chains" value="A/B=27-130"/>
</dbReference>
<dbReference type="PDB" id="1BU4">
    <property type="method" value="X-ray"/>
    <property type="resolution" value="1.90 A"/>
    <property type="chains" value="A=27-130"/>
</dbReference>
<dbReference type="PDB" id="1BVI">
    <property type="method" value="X-ray"/>
    <property type="resolution" value="1.90 A"/>
    <property type="chains" value="A/B/C/D=27-130"/>
</dbReference>
<dbReference type="PDB" id="1CH0">
    <property type="method" value="X-ray"/>
    <property type="resolution" value="2.30 A"/>
    <property type="chains" value="A/B/C=27-130"/>
</dbReference>
<dbReference type="PDB" id="1DET">
    <property type="method" value="X-ray"/>
    <property type="resolution" value="1.80 A"/>
    <property type="chains" value="A=27-130"/>
</dbReference>
<dbReference type="PDB" id="1FYS">
    <property type="method" value="X-ray"/>
    <property type="resolution" value="2.00 A"/>
    <property type="chains" value="A=27-130"/>
</dbReference>
<dbReference type="PDB" id="1FZU">
    <property type="method" value="X-ray"/>
    <property type="resolution" value="1.80 A"/>
    <property type="chains" value="A=27-130"/>
</dbReference>
<dbReference type="PDB" id="1G02">
    <property type="method" value="X-ray"/>
    <property type="resolution" value="1.86 A"/>
    <property type="chains" value="A=27-130"/>
</dbReference>
<dbReference type="PDB" id="1GSP">
    <property type="method" value="X-ray"/>
    <property type="resolution" value="2.20 A"/>
    <property type="chains" value="A=27-130"/>
</dbReference>
<dbReference type="PDB" id="1HYF">
    <property type="method" value="X-ray"/>
    <property type="resolution" value="1.70 A"/>
    <property type="chains" value="A=27-130"/>
</dbReference>
<dbReference type="PDB" id="1HZ1">
    <property type="method" value="X-ray"/>
    <property type="resolution" value="1.80 A"/>
    <property type="chains" value="A=27-130"/>
</dbReference>
<dbReference type="PDB" id="1I0V">
    <property type="method" value="X-ray"/>
    <property type="resolution" value="1.23 A"/>
    <property type="chains" value="A=27-130"/>
</dbReference>
<dbReference type="PDB" id="1I0X">
    <property type="method" value="X-ray"/>
    <property type="resolution" value="1.65 A"/>
    <property type="chains" value="A/B/C/D=27-130"/>
</dbReference>
<dbReference type="PDB" id="1I2E">
    <property type="method" value="X-ray"/>
    <property type="resolution" value="1.80 A"/>
    <property type="chains" value="A=27-130"/>
</dbReference>
<dbReference type="PDB" id="1I2F">
    <property type="method" value="X-ray"/>
    <property type="resolution" value="1.95 A"/>
    <property type="chains" value="A=27-130"/>
</dbReference>
<dbReference type="PDB" id="1I2G">
    <property type="method" value="X-ray"/>
    <property type="resolution" value="1.85 A"/>
    <property type="chains" value="A=27-130"/>
</dbReference>
<dbReference type="PDB" id="1I3F">
    <property type="method" value="X-ray"/>
    <property type="resolution" value="2.35 A"/>
    <property type="chains" value="A=27-130"/>
</dbReference>
<dbReference type="PDB" id="1I3I">
    <property type="method" value="X-ray"/>
    <property type="resolution" value="1.76 A"/>
    <property type="chains" value="A=27-130"/>
</dbReference>
<dbReference type="PDB" id="1IYY">
    <property type="method" value="NMR"/>
    <property type="chains" value="A=27-130"/>
</dbReference>
<dbReference type="PDB" id="1LOV">
    <property type="method" value="X-ray"/>
    <property type="resolution" value="1.55 A"/>
    <property type="chains" value="A=27-130"/>
</dbReference>
<dbReference type="PDB" id="1LOW">
    <property type="method" value="X-ray"/>
    <property type="resolution" value="1.90 A"/>
    <property type="chains" value="A=27-130"/>
</dbReference>
<dbReference type="PDB" id="1LOY">
    <property type="method" value="X-ray"/>
    <property type="resolution" value="1.55 A"/>
    <property type="chains" value="A=27-130"/>
</dbReference>
<dbReference type="PDB" id="1LRA">
    <property type="method" value="X-ray"/>
    <property type="resolution" value="1.90 A"/>
    <property type="chains" value="A=27-130"/>
</dbReference>
<dbReference type="PDB" id="1Q9E">
    <property type="method" value="X-ray"/>
    <property type="resolution" value="1.70 A"/>
    <property type="chains" value="A/B/C=27-130"/>
</dbReference>
<dbReference type="PDB" id="1RGA">
    <property type="method" value="X-ray"/>
    <property type="resolution" value="1.70 A"/>
    <property type="chains" value="A=27-130"/>
</dbReference>
<dbReference type="PDB" id="1RGC">
    <property type="method" value="X-ray"/>
    <property type="resolution" value="2.00 A"/>
    <property type="chains" value="A/B=27-130"/>
</dbReference>
<dbReference type="PDB" id="1RGK">
    <property type="method" value="X-ray"/>
    <property type="resolution" value="1.87 A"/>
    <property type="chains" value="A=27-130"/>
</dbReference>
<dbReference type="PDB" id="1RGL">
    <property type="method" value="X-ray"/>
    <property type="resolution" value="2.00 A"/>
    <property type="chains" value="A=27-130"/>
</dbReference>
<dbReference type="PDB" id="1RHL">
    <property type="method" value="X-ray"/>
    <property type="resolution" value="1.95 A"/>
    <property type="chains" value="A=27-130"/>
</dbReference>
<dbReference type="PDB" id="1RLS">
    <property type="method" value="X-ray"/>
    <property type="resolution" value="1.90 A"/>
    <property type="chains" value="A=27-130"/>
</dbReference>
<dbReference type="PDB" id="1RN1">
    <property type="method" value="X-ray"/>
    <property type="resolution" value="1.84 A"/>
    <property type="chains" value="A/B/C=27-130"/>
</dbReference>
<dbReference type="PDB" id="1RN4">
    <property type="method" value="X-ray"/>
    <property type="resolution" value="1.80 A"/>
    <property type="chains" value="A=27-130"/>
</dbReference>
<dbReference type="PDB" id="1RNT">
    <property type="method" value="X-ray"/>
    <property type="resolution" value="1.90 A"/>
    <property type="chains" value="A=27-130"/>
</dbReference>
<dbReference type="PDB" id="1TRP">
    <property type="method" value="X-ray"/>
    <property type="resolution" value="2.40 A"/>
    <property type="chains" value="A/B=27-130"/>
</dbReference>
<dbReference type="PDB" id="1TRQ">
    <property type="method" value="X-ray"/>
    <property type="resolution" value="2.30 A"/>
    <property type="chains" value="A/B=27-130"/>
</dbReference>
<dbReference type="PDB" id="1TTO">
    <property type="method" value="X-ray"/>
    <property type="resolution" value="2.10 A"/>
    <property type="chains" value="A/B/C=27-130"/>
</dbReference>
<dbReference type="PDB" id="1YGW">
    <property type="method" value="NMR"/>
    <property type="chains" value="A=27-130"/>
</dbReference>
<dbReference type="PDB" id="2AAD">
    <property type="method" value="X-ray"/>
    <property type="resolution" value="2.00 A"/>
    <property type="chains" value="A/B=27-130"/>
</dbReference>
<dbReference type="PDB" id="2AAE">
    <property type="method" value="X-ray"/>
    <property type="resolution" value="1.80 A"/>
    <property type="chains" value="A=27-130"/>
</dbReference>
<dbReference type="PDB" id="2BIR">
    <property type="method" value="X-ray"/>
    <property type="resolution" value="2.30 A"/>
    <property type="chains" value="A=27-130"/>
</dbReference>
<dbReference type="PDB" id="2BU4">
    <property type="method" value="X-ray"/>
    <property type="resolution" value="1.95 A"/>
    <property type="chains" value="A=27-130"/>
</dbReference>
<dbReference type="PDB" id="2GSP">
    <property type="method" value="X-ray"/>
    <property type="resolution" value="1.80 A"/>
    <property type="chains" value="A=27-130"/>
</dbReference>
<dbReference type="PDB" id="2HOH">
    <property type="method" value="X-ray"/>
    <property type="resolution" value="1.90 A"/>
    <property type="chains" value="A/B/C/D=27-130"/>
</dbReference>
<dbReference type="PDB" id="2RNT">
    <property type="method" value="X-ray"/>
    <property type="resolution" value="1.80 A"/>
    <property type="chains" value="A=27-130"/>
</dbReference>
<dbReference type="PDB" id="3BIR">
    <property type="method" value="X-ray"/>
    <property type="resolution" value="1.80 A"/>
    <property type="chains" value="A=27-130"/>
</dbReference>
<dbReference type="PDB" id="3BU4">
    <property type="method" value="X-ray"/>
    <property type="resolution" value="1.77 A"/>
    <property type="chains" value="A=27-130"/>
</dbReference>
<dbReference type="PDB" id="3GSP">
    <property type="method" value="X-ray"/>
    <property type="resolution" value="1.90 A"/>
    <property type="chains" value="A=27-130"/>
</dbReference>
<dbReference type="PDB" id="3HOH">
    <property type="method" value="X-ray"/>
    <property type="resolution" value="1.95 A"/>
    <property type="chains" value="A/B/C/D=27-130"/>
</dbReference>
<dbReference type="PDB" id="3RNT">
    <property type="method" value="X-ray"/>
    <property type="resolution" value="1.80 A"/>
    <property type="chains" value="A=27-130"/>
</dbReference>
<dbReference type="PDB" id="3SYU">
    <property type="method" value="X-ray"/>
    <property type="resolution" value="1.95 A"/>
    <property type="chains" value="A=27-130"/>
</dbReference>
<dbReference type="PDB" id="3URP">
    <property type="method" value="X-ray"/>
    <property type="resolution" value="3.19 A"/>
    <property type="chains" value="A=27-130"/>
</dbReference>
<dbReference type="PDB" id="4BIR">
    <property type="method" value="X-ray"/>
    <property type="resolution" value="1.70 A"/>
    <property type="chains" value="A=27-130"/>
</dbReference>
<dbReference type="PDB" id="4BU4">
    <property type="method" value="X-ray"/>
    <property type="resolution" value="1.80 A"/>
    <property type="chains" value="A=27-130"/>
</dbReference>
<dbReference type="PDB" id="4GSP">
    <property type="method" value="X-ray"/>
    <property type="resolution" value="1.65 A"/>
    <property type="chains" value="A=27-130"/>
</dbReference>
<dbReference type="PDB" id="4HOH">
    <property type="method" value="X-ray"/>
    <property type="resolution" value="2.05 A"/>
    <property type="chains" value="A/B/C/D=27-130"/>
</dbReference>
<dbReference type="PDB" id="4ODK">
    <property type="method" value="X-ray"/>
    <property type="resolution" value="1.40 A"/>
    <property type="chains" value="B/C=59-73"/>
</dbReference>
<dbReference type="PDB" id="4RNT">
    <property type="method" value="X-ray"/>
    <property type="resolution" value="2.20 A"/>
    <property type="chains" value="A=27-130"/>
</dbReference>
<dbReference type="PDB" id="5BIR">
    <property type="method" value="X-ray"/>
    <property type="resolution" value="2.00 A"/>
    <property type="chains" value="A/B=27-130"/>
</dbReference>
<dbReference type="PDB" id="5BU4">
    <property type="method" value="X-ray"/>
    <property type="resolution" value="1.77 A"/>
    <property type="chains" value="A=27-130"/>
</dbReference>
<dbReference type="PDB" id="5GSP">
    <property type="method" value="X-ray"/>
    <property type="resolution" value="1.80 A"/>
    <property type="chains" value="A=27-130"/>
</dbReference>
<dbReference type="PDB" id="5HOH">
    <property type="method" value="X-ray"/>
    <property type="resolution" value="2.00 A"/>
    <property type="chains" value="A/B/C/D=27-130"/>
</dbReference>
<dbReference type="PDB" id="5RNT">
    <property type="method" value="X-ray"/>
    <property type="resolution" value="3.20 A"/>
    <property type="chains" value="A=27-130"/>
</dbReference>
<dbReference type="PDB" id="6GSP">
    <property type="method" value="X-ray"/>
    <property type="resolution" value="2.20 A"/>
    <property type="chains" value="A=27-130"/>
</dbReference>
<dbReference type="PDB" id="6RNT">
    <property type="method" value="X-ray"/>
    <property type="resolution" value="1.80 A"/>
    <property type="chains" value="A=27-130"/>
</dbReference>
<dbReference type="PDB" id="7GSP">
    <property type="method" value="X-ray"/>
    <property type="resolution" value="2.00 A"/>
    <property type="chains" value="A/B=27-130"/>
</dbReference>
<dbReference type="PDB" id="7RNT">
    <property type="method" value="X-ray"/>
    <property type="resolution" value="1.90 A"/>
    <property type="chains" value="A=27-130"/>
</dbReference>
<dbReference type="PDB" id="8RNT">
    <property type="method" value="X-ray"/>
    <property type="resolution" value="1.80 A"/>
    <property type="chains" value="A=27-130"/>
</dbReference>
<dbReference type="PDB" id="9RNT">
    <property type="method" value="X-ray"/>
    <property type="resolution" value="1.50 A"/>
    <property type="chains" value="A=27-130"/>
</dbReference>
<dbReference type="PDBsum" id="1B2M"/>
<dbReference type="PDBsum" id="1BIR"/>
<dbReference type="PDBsum" id="1BU4"/>
<dbReference type="PDBsum" id="1BVI"/>
<dbReference type="PDBsum" id="1CH0"/>
<dbReference type="PDBsum" id="1DET"/>
<dbReference type="PDBsum" id="1FYS"/>
<dbReference type="PDBsum" id="1FZU"/>
<dbReference type="PDBsum" id="1G02"/>
<dbReference type="PDBsum" id="1GSP"/>
<dbReference type="PDBsum" id="1HYF"/>
<dbReference type="PDBsum" id="1HZ1"/>
<dbReference type="PDBsum" id="1I0V"/>
<dbReference type="PDBsum" id="1I0X"/>
<dbReference type="PDBsum" id="1I2E"/>
<dbReference type="PDBsum" id="1I2F"/>
<dbReference type="PDBsum" id="1I2G"/>
<dbReference type="PDBsum" id="1I3F"/>
<dbReference type="PDBsum" id="1I3I"/>
<dbReference type="PDBsum" id="1IYY"/>
<dbReference type="PDBsum" id="1LOV"/>
<dbReference type="PDBsum" id="1LOW"/>
<dbReference type="PDBsum" id="1LOY"/>
<dbReference type="PDBsum" id="1LRA"/>
<dbReference type="PDBsum" id="1Q9E"/>
<dbReference type="PDBsum" id="1RGA"/>
<dbReference type="PDBsum" id="1RGC"/>
<dbReference type="PDBsum" id="1RGK"/>
<dbReference type="PDBsum" id="1RGL"/>
<dbReference type="PDBsum" id="1RHL"/>
<dbReference type="PDBsum" id="1RLS"/>
<dbReference type="PDBsum" id="1RN1"/>
<dbReference type="PDBsum" id="1RN4"/>
<dbReference type="PDBsum" id="1RNT"/>
<dbReference type="PDBsum" id="1TRP"/>
<dbReference type="PDBsum" id="1TRQ"/>
<dbReference type="PDBsum" id="1TTO"/>
<dbReference type="PDBsum" id="1YGW"/>
<dbReference type="PDBsum" id="2AAD"/>
<dbReference type="PDBsum" id="2AAE"/>
<dbReference type="PDBsum" id="2BIR"/>
<dbReference type="PDBsum" id="2BU4"/>
<dbReference type="PDBsum" id="2GSP"/>
<dbReference type="PDBsum" id="2HOH"/>
<dbReference type="PDBsum" id="2RNT"/>
<dbReference type="PDBsum" id="3BIR"/>
<dbReference type="PDBsum" id="3BU4"/>
<dbReference type="PDBsum" id="3GSP"/>
<dbReference type="PDBsum" id="3HOH"/>
<dbReference type="PDBsum" id="3RNT"/>
<dbReference type="PDBsum" id="3SYU"/>
<dbReference type="PDBsum" id="3URP"/>
<dbReference type="PDBsum" id="4BIR"/>
<dbReference type="PDBsum" id="4BU4"/>
<dbReference type="PDBsum" id="4GSP"/>
<dbReference type="PDBsum" id="4HOH"/>
<dbReference type="PDBsum" id="4ODK"/>
<dbReference type="PDBsum" id="4RNT"/>
<dbReference type="PDBsum" id="5BIR"/>
<dbReference type="PDBsum" id="5BU4"/>
<dbReference type="PDBsum" id="5GSP"/>
<dbReference type="PDBsum" id="5HOH"/>
<dbReference type="PDBsum" id="5RNT"/>
<dbReference type="PDBsum" id="6GSP"/>
<dbReference type="PDBsum" id="6RNT"/>
<dbReference type="PDBsum" id="7GSP"/>
<dbReference type="PDBsum" id="7RNT"/>
<dbReference type="PDBsum" id="8RNT"/>
<dbReference type="PDBsum" id="9RNT"/>
<dbReference type="BMRB" id="P00651"/>
<dbReference type="SMR" id="P00651"/>
<dbReference type="STRING" id="510516.P00651"/>
<dbReference type="BindingDB" id="P00651"/>
<dbReference type="ChEMBL" id="CHEMBL1075043"/>
<dbReference type="CarbonylDB" id="P00651"/>
<dbReference type="EnsemblFungi" id="BAE64671">
    <property type="protein sequence ID" value="BAE64671"/>
    <property type="gene ID" value="AO090011000118"/>
</dbReference>
<dbReference type="GeneID" id="5997907"/>
<dbReference type="KEGG" id="aor:AO090011000118"/>
<dbReference type="VEuPathDB" id="FungiDB:AO090011000118"/>
<dbReference type="HOGENOM" id="CLU_111658_1_0_1"/>
<dbReference type="OMA" id="ACAYTCG"/>
<dbReference type="OrthoDB" id="83596at5052"/>
<dbReference type="BRENDA" id="4.6.1.24">
    <property type="organism ID" value="522"/>
</dbReference>
<dbReference type="SABIO-RK" id="P00651"/>
<dbReference type="EvolutionaryTrace" id="P00651"/>
<dbReference type="PRO" id="PR:P00651"/>
<dbReference type="Proteomes" id="UP000006564">
    <property type="component" value="Chromosome 7"/>
</dbReference>
<dbReference type="GO" id="GO:0030428">
    <property type="term" value="C:cell septum"/>
    <property type="evidence" value="ECO:0000314"/>
    <property type="project" value="AspGD"/>
</dbReference>
<dbReference type="GO" id="GO:0001411">
    <property type="term" value="C:hyphal tip"/>
    <property type="evidence" value="ECO:0000314"/>
    <property type="project" value="AspGD"/>
</dbReference>
<dbReference type="GO" id="GO:0016829">
    <property type="term" value="F:lyase activity"/>
    <property type="evidence" value="ECO:0007669"/>
    <property type="project" value="UniProtKB-KW"/>
</dbReference>
<dbReference type="GO" id="GO:0046589">
    <property type="term" value="F:ribonuclease T1 activity"/>
    <property type="evidence" value="ECO:0007669"/>
    <property type="project" value="UniProtKB-EC"/>
</dbReference>
<dbReference type="GO" id="GO:0003723">
    <property type="term" value="F:RNA binding"/>
    <property type="evidence" value="ECO:0007669"/>
    <property type="project" value="InterPro"/>
</dbReference>
<dbReference type="GO" id="GO:0004521">
    <property type="term" value="F:RNA endonuclease activity"/>
    <property type="evidence" value="ECO:0007669"/>
    <property type="project" value="InterPro"/>
</dbReference>
<dbReference type="CDD" id="cd00606">
    <property type="entry name" value="fungal_RNase"/>
    <property type="match status" value="1"/>
</dbReference>
<dbReference type="FunFam" id="3.10.450.30:FF:000002">
    <property type="entry name" value="Guanyl-specific ribonuclease T1"/>
    <property type="match status" value="1"/>
</dbReference>
<dbReference type="Gene3D" id="3.10.450.30">
    <property type="entry name" value="Microbial ribonucleases"/>
    <property type="match status" value="1"/>
</dbReference>
<dbReference type="InterPro" id="IPR000026">
    <property type="entry name" value="N1-like"/>
</dbReference>
<dbReference type="InterPro" id="IPR016191">
    <property type="entry name" value="Ribonuclease/ribotoxin"/>
</dbReference>
<dbReference type="InterPro" id="IPR051386">
    <property type="entry name" value="Ribonuclease_N1/T1"/>
</dbReference>
<dbReference type="InterPro" id="IPR048269">
    <property type="entry name" value="RNase_U2"/>
</dbReference>
<dbReference type="PANTHER" id="PTHR42104">
    <property type="entry name" value="EXTRACELLULAR GUANYL-SPECIFIC RIBONUCLEASE RNTA (AFU_ORTHOLOGUE AFUA_4G03230)"/>
    <property type="match status" value="1"/>
</dbReference>
<dbReference type="PANTHER" id="PTHR42104:SF1">
    <property type="entry name" value="EXTRACELLULAR GUANYL-SPECIFIC RIBONUCLEASE RNTA (AFU_ORTHOLOGUE AFUA_4G03230)"/>
    <property type="match status" value="1"/>
</dbReference>
<dbReference type="Pfam" id="PF00545">
    <property type="entry name" value="Ribonuclease"/>
    <property type="match status" value="1"/>
</dbReference>
<dbReference type="PIRSF" id="PIRSF037430">
    <property type="entry name" value="RNase_U2"/>
    <property type="match status" value="1"/>
</dbReference>
<dbReference type="SUPFAM" id="SSF53933">
    <property type="entry name" value="Microbial ribonucleases"/>
    <property type="match status" value="1"/>
</dbReference>